<keyword id="KW-0997">Cell inner membrane</keyword>
<keyword id="KW-1003">Cell membrane</keyword>
<keyword id="KW-0472">Membrane</keyword>
<keyword id="KW-0520">NAD</keyword>
<keyword id="KW-0874">Quinone</keyword>
<keyword id="KW-1278">Translocase</keyword>
<keyword id="KW-0813">Transport</keyword>
<reference key="1">
    <citation type="submission" date="2007-03" db="EMBL/GenBank/DDBJ databases">
        <title>Complete sequence of Prosthecochloris vibrioformis DSM 265.</title>
        <authorList>
            <consortium name="US DOE Joint Genome Institute"/>
            <person name="Copeland A."/>
            <person name="Lucas S."/>
            <person name="Lapidus A."/>
            <person name="Barry K."/>
            <person name="Detter J.C."/>
            <person name="Glavina del Rio T."/>
            <person name="Hammon N."/>
            <person name="Israni S."/>
            <person name="Pitluck S."/>
            <person name="Schmutz J."/>
            <person name="Larimer F."/>
            <person name="Land M."/>
            <person name="Hauser L."/>
            <person name="Mikhailova N."/>
            <person name="Li T."/>
            <person name="Overmann J."/>
            <person name="Schuster S.C."/>
            <person name="Bryant D.A."/>
            <person name="Richardson P."/>
        </authorList>
    </citation>
    <scope>NUCLEOTIDE SEQUENCE [LARGE SCALE GENOMIC DNA]</scope>
    <source>
        <strain>DSM 265 / 1930</strain>
    </source>
</reference>
<sequence>MQELEMAGQGSLRLSRKSDTIVVLEKDLSTEQMVLSMGPQHPSTHGVLRLECLTDGEVVTEAEPYLGYLHRCFEKHCEHVDYPAIVPYTDRMDYLAGINSEMAYCVAVEKLLDLEIPRRVEFIRVIVSELNRIASHLVAIGTYAIDLGAFTPFLFCFRDREHILNMLEWATGARMLYNYIWVGGLAYDVPAGFNERVLEFVNYFRPKALELQQLLTENEIFVKRTKGIGIMPADVAINYGWSGPMLRGSGVQWDIRRNDPYSIYPELDFAVPVPDGKLSVVGDCLSRHLVRALEIEESLKIIEQCIDKMPGTQGFDPRSAVPKRVRPKAGEVYGRAENPRGELGFYIQSDGKSTSPLRCKARSSCFVNLSAMKDLSRGQLIPDLVAIIGSLDIVLGEVDR</sequence>
<feature type="chain" id="PRO_0000357890" description="NADH-quinone oxidoreductase subunit D">
    <location>
        <begin position="1"/>
        <end position="400"/>
    </location>
</feature>
<protein>
    <recommendedName>
        <fullName evidence="1">NADH-quinone oxidoreductase subunit D</fullName>
        <ecNumber evidence="1">7.1.1.-</ecNumber>
    </recommendedName>
    <alternativeName>
        <fullName evidence="1">NADH dehydrogenase I subunit D</fullName>
    </alternativeName>
    <alternativeName>
        <fullName evidence="1">NDH-1 subunit D</fullName>
    </alternativeName>
</protein>
<gene>
    <name evidence="1" type="primary">nuoD</name>
    <name type="ordered locus">Cvib_1090</name>
</gene>
<comment type="function">
    <text evidence="1">NDH-1 shuttles electrons from NADH, via FMN and iron-sulfur (Fe-S) centers, to quinones in the respiratory chain. The immediate electron acceptor for the enzyme in this species is believed to be a menaquinone. Couples the redox reaction to proton translocation (for every two electrons transferred, four hydrogen ions are translocated across the cytoplasmic membrane), and thus conserves the redox energy in a proton gradient.</text>
</comment>
<comment type="catalytic activity">
    <reaction evidence="1">
        <text>a quinone + NADH + 5 H(+)(in) = a quinol + NAD(+) + 4 H(+)(out)</text>
        <dbReference type="Rhea" id="RHEA:57888"/>
        <dbReference type="ChEBI" id="CHEBI:15378"/>
        <dbReference type="ChEBI" id="CHEBI:24646"/>
        <dbReference type="ChEBI" id="CHEBI:57540"/>
        <dbReference type="ChEBI" id="CHEBI:57945"/>
        <dbReference type="ChEBI" id="CHEBI:132124"/>
    </reaction>
</comment>
<comment type="subunit">
    <text evidence="1">NDH-1 is composed of 14 different subunits. Subunits NuoB, C, D, E, F, and G constitute the peripheral sector of the complex.</text>
</comment>
<comment type="subcellular location">
    <subcellularLocation>
        <location evidence="1">Cell inner membrane</location>
        <topology evidence="1">Peripheral membrane protein</topology>
        <orientation evidence="1">Cytoplasmic side</orientation>
    </subcellularLocation>
</comment>
<comment type="similarity">
    <text evidence="1">Belongs to the complex I 49 kDa subunit family.</text>
</comment>
<evidence type="ECO:0000255" key="1">
    <source>
        <dbReference type="HAMAP-Rule" id="MF_01358"/>
    </source>
</evidence>
<proteinExistence type="inferred from homology"/>
<name>NUOD_CHLPM</name>
<organism>
    <name type="scientific">Chlorobium phaeovibrioides (strain DSM 265 / 1930)</name>
    <name type="common">Prosthecochloris vibrioformis (strain DSM 265)</name>
    <dbReference type="NCBI Taxonomy" id="290318"/>
    <lineage>
        <taxon>Bacteria</taxon>
        <taxon>Pseudomonadati</taxon>
        <taxon>Chlorobiota</taxon>
        <taxon>Chlorobiia</taxon>
        <taxon>Chlorobiales</taxon>
        <taxon>Chlorobiaceae</taxon>
        <taxon>Chlorobium/Pelodictyon group</taxon>
        <taxon>Chlorobium</taxon>
    </lineage>
</organism>
<dbReference type="EC" id="7.1.1.-" evidence="1"/>
<dbReference type="EMBL" id="CP000607">
    <property type="protein sequence ID" value="ABP37104.1"/>
    <property type="molecule type" value="Genomic_DNA"/>
</dbReference>
<dbReference type="SMR" id="A4SF45"/>
<dbReference type="STRING" id="290318.Cvib_1090"/>
<dbReference type="KEGG" id="pvi:Cvib_1090"/>
<dbReference type="eggNOG" id="COG0649">
    <property type="taxonomic scope" value="Bacteria"/>
</dbReference>
<dbReference type="HOGENOM" id="CLU_015134_1_2_10"/>
<dbReference type="OrthoDB" id="9801496at2"/>
<dbReference type="GO" id="GO:0005886">
    <property type="term" value="C:plasma membrane"/>
    <property type="evidence" value="ECO:0007669"/>
    <property type="project" value="UniProtKB-SubCell"/>
</dbReference>
<dbReference type="GO" id="GO:0051287">
    <property type="term" value="F:NAD binding"/>
    <property type="evidence" value="ECO:0007669"/>
    <property type="project" value="InterPro"/>
</dbReference>
<dbReference type="GO" id="GO:0050136">
    <property type="term" value="F:NADH:ubiquinone reductase (non-electrogenic) activity"/>
    <property type="evidence" value="ECO:0007669"/>
    <property type="project" value="UniProtKB-UniRule"/>
</dbReference>
<dbReference type="GO" id="GO:0048038">
    <property type="term" value="F:quinone binding"/>
    <property type="evidence" value="ECO:0007669"/>
    <property type="project" value="UniProtKB-KW"/>
</dbReference>
<dbReference type="Gene3D" id="1.10.645.10">
    <property type="entry name" value="Cytochrome-c3 Hydrogenase, chain B"/>
    <property type="match status" value="1"/>
</dbReference>
<dbReference type="HAMAP" id="MF_01358">
    <property type="entry name" value="NDH1_NuoD"/>
    <property type="match status" value="1"/>
</dbReference>
<dbReference type="InterPro" id="IPR001135">
    <property type="entry name" value="NADH_Q_OxRdtase_suD"/>
</dbReference>
<dbReference type="InterPro" id="IPR022885">
    <property type="entry name" value="NDH1_su_D/H"/>
</dbReference>
<dbReference type="InterPro" id="IPR029014">
    <property type="entry name" value="NiFe-Hase_large"/>
</dbReference>
<dbReference type="NCBIfam" id="NF004739">
    <property type="entry name" value="PRK06075.1"/>
    <property type="match status" value="1"/>
</dbReference>
<dbReference type="PANTHER" id="PTHR11993:SF10">
    <property type="entry name" value="NADH DEHYDROGENASE [UBIQUINONE] IRON-SULFUR PROTEIN 2, MITOCHONDRIAL"/>
    <property type="match status" value="1"/>
</dbReference>
<dbReference type="PANTHER" id="PTHR11993">
    <property type="entry name" value="NADH-UBIQUINONE OXIDOREDUCTASE 49 KDA SUBUNIT"/>
    <property type="match status" value="1"/>
</dbReference>
<dbReference type="Pfam" id="PF00346">
    <property type="entry name" value="Complex1_49kDa"/>
    <property type="match status" value="2"/>
</dbReference>
<dbReference type="SUPFAM" id="SSF56762">
    <property type="entry name" value="HydB/Nqo4-like"/>
    <property type="match status" value="1"/>
</dbReference>
<accession>A4SF45</accession>